<feature type="chain" id="PRO_0000361203" description="Putative S-adenosyl-L-methionine-dependent methyltransferase Mjls_1071">
    <location>
        <begin position="1"/>
        <end position="304"/>
    </location>
</feature>
<feature type="binding site" evidence="1">
    <location>
        <position position="130"/>
    </location>
    <ligand>
        <name>S-adenosyl-L-methionine</name>
        <dbReference type="ChEBI" id="CHEBI:59789"/>
    </ligand>
</feature>
<feature type="binding site" evidence="1">
    <location>
        <begin position="159"/>
        <end position="160"/>
    </location>
    <ligand>
        <name>S-adenosyl-L-methionine</name>
        <dbReference type="ChEBI" id="CHEBI:59789"/>
    </ligand>
</feature>
<sequence>MARAEGDSWDVASSVGATAAMVAAGRAVATRDPRGLIDDPYAAPLVRAVGIEFFTKVADGEFDMTELDPSSAAEMQARIDEMALRTRFFDDYFLASTAGGIRQVVILASGLDSRAYRLPWPDGTVVYEIDQPAVIDFKTSTLAGIGAEPTAERRTVAIDLREDWPAALRAAGFDSAAPTAWCAEGLLIYLPPEAQDLLFDNVTALSATGSTVATEYVPGILNFDAEKARAASAQMRERGLDLDMPSLVYHGERKHVMEYLTSLGWTMAGLPRTDLFAKHGVPMVAHDNDPLGEIVYVSGTYQNR</sequence>
<organism>
    <name type="scientific">Mycobacterium sp. (strain JLS)</name>
    <dbReference type="NCBI Taxonomy" id="164757"/>
    <lineage>
        <taxon>Bacteria</taxon>
        <taxon>Bacillati</taxon>
        <taxon>Actinomycetota</taxon>
        <taxon>Actinomycetes</taxon>
        <taxon>Mycobacteriales</taxon>
        <taxon>Mycobacteriaceae</taxon>
        <taxon>Mycobacterium</taxon>
    </lineage>
</organism>
<proteinExistence type="inferred from homology"/>
<evidence type="ECO:0000250" key="1"/>
<evidence type="ECO:0000305" key="2"/>
<keyword id="KW-0489">Methyltransferase</keyword>
<keyword id="KW-0949">S-adenosyl-L-methionine</keyword>
<keyword id="KW-0808">Transferase</keyword>
<dbReference type="EC" id="2.1.1.-"/>
<dbReference type="EMBL" id="CP000580">
    <property type="protein sequence ID" value="ABN96878.1"/>
    <property type="molecule type" value="Genomic_DNA"/>
</dbReference>
<dbReference type="SMR" id="A3PVF1"/>
<dbReference type="KEGG" id="mjl:Mjls_1071"/>
<dbReference type="HOGENOM" id="CLU_056160_2_1_11"/>
<dbReference type="BioCyc" id="MSP164757:G1G8C-1084-MONOMER"/>
<dbReference type="GO" id="GO:0008168">
    <property type="term" value="F:methyltransferase activity"/>
    <property type="evidence" value="ECO:0007669"/>
    <property type="project" value="UniProtKB-KW"/>
</dbReference>
<dbReference type="GO" id="GO:0032259">
    <property type="term" value="P:methylation"/>
    <property type="evidence" value="ECO:0007669"/>
    <property type="project" value="UniProtKB-KW"/>
</dbReference>
<dbReference type="FunFam" id="3.40.50.150:FF:000152">
    <property type="entry name" value="S-adenosyl-L-methionine-dependent methyltransferase"/>
    <property type="match status" value="1"/>
</dbReference>
<dbReference type="Gene3D" id="3.40.50.150">
    <property type="entry name" value="Vaccinia Virus protein VP39"/>
    <property type="match status" value="1"/>
</dbReference>
<dbReference type="InterPro" id="IPR007213">
    <property type="entry name" value="Ppm1/Ppm2/Tcmp"/>
</dbReference>
<dbReference type="InterPro" id="IPR029063">
    <property type="entry name" value="SAM-dependent_MTases_sf"/>
</dbReference>
<dbReference type="InterPro" id="IPR011610">
    <property type="entry name" value="SAM_mthyl_Trfase_ML2640-like"/>
</dbReference>
<dbReference type="NCBIfam" id="TIGR00027">
    <property type="entry name" value="mthyl_TIGR00027"/>
    <property type="match status" value="1"/>
</dbReference>
<dbReference type="PANTHER" id="PTHR43619">
    <property type="entry name" value="S-ADENOSYL-L-METHIONINE-DEPENDENT METHYLTRANSFERASE YKTD-RELATED"/>
    <property type="match status" value="1"/>
</dbReference>
<dbReference type="PANTHER" id="PTHR43619:SF2">
    <property type="entry name" value="S-ADENOSYL-L-METHIONINE-DEPENDENT METHYLTRANSFERASES SUPERFAMILY PROTEIN"/>
    <property type="match status" value="1"/>
</dbReference>
<dbReference type="Pfam" id="PF04072">
    <property type="entry name" value="LCM"/>
    <property type="match status" value="1"/>
</dbReference>
<dbReference type="SUPFAM" id="SSF53335">
    <property type="entry name" value="S-adenosyl-L-methionine-dependent methyltransferases"/>
    <property type="match status" value="1"/>
</dbReference>
<name>Y1071_MYCSJ</name>
<gene>
    <name type="ordered locus">Mjls_1071</name>
</gene>
<protein>
    <recommendedName>
        <fullName>Putative S-adenosyl-L-methionine-dependent methyltransferase Mjls_1071</fullName>
        <ecNumber>2.1.1.-</ecNumber>
    </recommendedName>
</protein>
<comment type="function">
    <text evidence="1">Exhibits S-adenosyl-L-methionine-dependent methyltransferase activity.</text>
</comment>
<comment type="similarity">
    <text evidence="2">Belongs to the UPF0677 family.</text>
</comment>
<accession>A3PVF1</accession>
<reference key="1">
    <citation type="submission" date="2007-02" db="EMBL/GenBank/DDBJ databases">
        <title>Complete sequence of Mycobacterium sp. JLS.</title>
        <authorList>
            <consortium name="US DOE Joint Genome Institute"/>
            <person name="Copeland A."/>
            <person name="Lucas S."/>
            <person name="Lapidus A."/>
            <person name="Barry K."/>
            <person name="Detter J.C."/>
            <person name="Glavina del Rio T."/>
            <person name="Hammon N."/>
            <person name="Israni S."/>
            <person name="Dalin E."/>
            <person name="Tice H."/>
            <person name="Pitluck S."/>
            <person name="Chain P."/>
            <person name="Malfatti S."/>
            <person name="Shin M."/>
            <person name="Vergez L."/>
            <person name="Schmutz J."/>
            <person name="Larimer F."/>
            <person name="Land M."/>
            <person name="Hauser L."/>
            <person name="Kyrpides N."/>
            <person name="Mikhailova N."/>
            <person name="Miller C.D."/>
            <person name="Anderson A.J."/>
            <person name="Sims R.C."/>
            <person name="Richardson P."/>
        </authorList>
    </citation>
    <scope>NUCLEOTIDE SEQUENCE [LARGE SCALE GENOMIC DNA]</scope>
    <source>
        <strain>JLS</strain>
    </source>
</reference>